<protein>
    <recommendedName>
        <fullName evidence="1">Farnesyl pyrophosphate synthase</fullName>
        <shortName evidence="1">FPP synthase</shortName>
        <shortName evidence="1">FPS</shortName>
        <ecNumber evidence="6">2.5.1.10</ecNumber>
    </recommendedName>
    <alternativeName>
        <fullName evidence="4">(2E,6E)-farnesyl diphosphate synthase</fullName>
    </alternativeName>
    <alternativeName>
        <fullName evidence="1">Dimethylallyltranstransferase</fullName>
        <ecNumber evidence="6">2.5.1.1</ecNumber>
    </alternativeName>
    <alternativeName>
        <fullName evidence="4">Farnesyl diphosphate synthase</fullName>
    </alternativeName>
    <alternativeName>
        <fullName evidence="4">Geranyltranstransferase</fullName>
    </alternativeName>
</protein>
<gene>
    <name evidence="4" type="primary">ERG20</name>
    <name type="ordered locus">orf19.4491</name>
    <name type="ORF">CAALFM_C204580WA</name>
</gene>
<accession>A0A1D8PH78</accession>
<reference key="1">
    <citation type="journal article" date="2004" name="Proc. Natl. Acad. Sci. U.S.A.">
        <title>The diploid genome sequence of Candida albicans.</title>
        <authorList>
            <person name="Jones T."/>
            <person name="Federspiel N.A."/>
            <person name="Chibana H."/>
            <person name="Dungan J."/>
            <person name="Kalman S."/>
            <person name="Magee B.B."/>
            <person name="Newport G."/>
            <person name="Thorstenson Y.R."/>
            <person name="Agabian N."/>
            <person name="Magee P.T."/>
            <person name="Davis R.W."/>
            <person name="Scherer S."/>
        </authorList>
    </citation>
    <scope>NUCLEOTIDE SEQUENCE [LARGE SCALE GENOMIC DNA]</scope>
    <source>
        <strain>SC5314 / ATCC MYA-2876</strain>
    </source>
</reference>
<reference key="2">
    <citation type="journal article" date="2007" name="Genome Biol.">
        <title>Assembly of the Candida albicans genome into sixteen supercontigs aligned on the eight chromosomes.</title>
        <authorList>
            <person name="van het Hoog M."/>
            <person name="Rast T.J."/>
            <person name="Martchenko M."/>
            <person name="Grindle S."/>
            <person name="Dignard D."/>
            <person name="Hogues H."/>
            <person name="Cuomo C."/>
            <person name="Berriman M."/>
            <person name="Scherer S."/>
            <person name="Magee B.B."/>
            <person name="Whiteway M."/>
            <person name="Chibana H."/>
            <person name="Nantel A."/>
            <person name="Magee P.T."/>
        </authorList>
    </citation>
    <scope>GENOME REANNOTATION</scope>
    <source>
        <strain>SC5314 / ATCC MYA-2876</strain>
    </source>
</reference>
<reference key="3">
    <citation type="journal article" date="2013" name="Genome Biol.">
        <title>Assembly of a phased diploid Candida albicans genome facilitates allele-specific measurements and provides a simple model for repeat and indel structure.</title>
        <authorList>
            <person name="Muzzey D."/>
            <person name="Schwartz K."/>
            <person name="Weissman J.S."/>
            <person name="Sherlock G."/>
        </authorList>
    </citation>
    <scope>NUCLEOTIDE SEQUENCE [LARGE SCALE GENOMIC DNA]</scope>
    <scope>GENOME REANNOTATION</scope>
    <source>
        <strain>SC5314 / ATCC MYA-2876</strain>
    </source>
</reference>
<reference key="4">
    <citation type="journal article" date="2003" name="Med. Mycol.">
        <title>Antifungal activity of fluconazole in combination with lovastatin and their effects on gene expression in the ergosterol and prenylation pathways in Candida albicans.</title>
        <authorList>
            <person name="Song J.L."/>
            <person name="Lyons C.N."/>
            <person name="Holleman S."/>
            <person name="Oliver B.G."/>
            <person name="White T.C."/>
        </authorList>
    </citation>
    <scope>FUNCTION</scope>
    <scope>CATALYTIC ACTIVITY</scope>
    <scope>INDUCTION</scope>
    <scope>PATHWAY</scope>
</reference>
<sequence>MSDKLAARERFLDVFEDLVEELKQILVSYNMPQEAIEWFVRSLNYNTPGGKLNRGLSVVDTFAILNNTTSDKLNDTEYKKVALLGWAIELLQAYFLVADDMMDQSKTRRGQPCWYLVEGVNNIAINDSFMLEGAIYILLKKHFRQDPYYVDLLDLFHEVTFQTELGQLLDLITADEEIVDLDKFSLEKHSFIVIFKTAYYSFYLPVALAMYMSGINDEKDLKQVRDILIPLGEYFQIQDDYLDCFGTPEQIGKIGTDIKDNKCSWVINQALLIATPEQRQLLDNNYGKKDDESEQKCKDLFKQLGIEKIYHDYEESIVAKLRKQIDQIDESRGLKKDVLTAFLGKVYKRSK</sequence>
<feature type="chain" id="PRO_0000454170" description="Farnesyl pyrophosphate synthase">
    <location>
        <begin position="1"/>
        <end position="351"/>
    </location>
</feature>
<feature type="binding site" evidence="2">
    <location>
        <position position="51"/>
    </location>
    <ligand>
        <name>isopentenyl diphosphate</name>
        <dbReference type="ChEBI" id="CHEBI:128769"/>
    </ligand>
</feature>
<feature type="binding site" evidence="2">
    <location>
        <position position="54"/>
    </location>
    <ligand>
        <name>isopentenyl diphosphate</name>
        <dbReference type="ChEBI" id="CHEBI:128769"/>
    </ligand>
</feature>
<feature type="binding site" evidence="2">
    <location>
        <position position="92"/>
    </location>
    <ligand>
        <name>isopentenyl diphosphate</name>
        <dbReference type="ChEBI" id="CHEBI:128769"/>
    </ligand>
</feature>
<feature type="binding site" evidence="2">
    <location>
        <position position="99"/>
    </location>
    <ligand>
        <name>Mg(2+)</name>
        <dbReference type="ChEBI" id="CHEBI:18420"/>
        <label>1</label>
    </ligand>
</feature>
<feature type="binding site" evidence="2">
    <location>
        <position position="99"/>
    </location>
    <ligand>
        <name>Mg(2+)</name>
        <dbReference type="ChEBI" id="CHEBI:18420"/>
        <label>2</label>
    </ligand>
</feature>
<feature type="binding site" evidence="2">
    <location>
        <position position="103"/>
    </location>
    <ligand>
        <name>Mg(2+)</name>
        <dbReference type="ChEBI" id="CHEBI:18420"/>
        <label>1</label>
    </ligand>
</feature>
<feature type="binding site" evidence="2">
    <location>
        <position position="103"/>
    </location>
    <ligand>
        <name>Mg(2+)</name>
        <dbReference type="ChEBI" id="CHEBI:18420"/>
        <label>2</label>
    </ligand>
</feature>
<feature type="binding site" evidence="2">
    <location>
        <position position="108"/>
    </location>
    <ligand>
        <name>dimethylallyl diphosphate</name>
        <dbReference type="ChEBI" id="CHEBI:57623"/>
    </ligand>
</feature>
<feature type="binding site" evidence="2">
    <location>
        <position position="109"/>
    </location>
    <ligand>
        <name>isopentenyl diphosphate</name>
        <dbReference type="ChEBI" id="CHEBI:128769"/>
    </ligand>
</feature>
<feature type="binding site" evidence="2">
    <location>
        <position position="196"/>
    </location>
    <ligand>
        <name>dimethylallyl diphosphate</name>
        <dbReference type="ChEBI" id="CHEBI:57623"/>
    </ligand>
</feature>
<feature type="binding site" evidence="2">
    <location>
        <position position="197"/>
    </location>
    <ligand>
        <name>dimethylallyl diphosphate</name>
        <dbReference type="ChEBI" id="CHEBI:57623"/>
    </ligand>
</feature>
<feature type="binding site" evidence="2">
    <location>
        <position position="236"/>
    </location>
    <ligand>
        <name>dimethylallyl diphosphate</name>
        <dbReference type="ChEBI" id="CHEBI:57623"/>
    </ligand>
</feature>
<feature type="binding site" evidence="2">
    <location>
        <position position="253"/>
    </location>
    <ligand>
        <name>dimethylallyl diphosphate</name>
        <dbReference type="ChEBI" id="CHEBI:57623"/>
    </ligand>
</feature>
<feature type="binding site" evidence="2">
    <location>
        <position position="262"/>
    </location>
    <ligand>
        <name>dimethylallyl diphosphate</name>
        <dbReference type="ChEBI" id="CHEBI:57623"/>
    </ligand>
</feature>
<comment type="function">
    <text evidence="3 6">Farnesyl pyrophosphate synthase; part of the second module of ergosterol biosynthesis pathway that includes the middle steps of the pathway (PubMed:14653518). ERG20 catalyzes the sequential condensation of isopentenyl pyrophosphate with dimethylallyl pyrophosphate, and then with the resultant geranylpyrophosphate to the ultimate product farnesyl pyrophosphate (PubMed:14653518). The second module is carried out in the vacuole and involves the formation of farnesyl diphosphate, which is also an important intermediate in the biosynthesis of ubiquinone, dolichol, heme and prenylated proteins. Activity by the mevalonate kinase ERG12 first converts mevalonate into 5-phosphomevalonate. 5-phosphomevalonate is then further converted to 5-diphosphomevalonate by the phosphomevalonate kinase ERG8. The diphosphomevalonate decarboxylase MVD then produces isopentenyl diphosphate. The isopentenyl-diphosphate delta-isomerase IDI1 then catalyzes the 1,3-allylic rearrangement of the homoallylic substrate isopentenyl (IPP) to its highly electrophilic allylic isomer, dimethylallyl diphosphate (DMAPP). Finally the farnesyl diphosphate synthase ERG20 catalyzes the sequential condensation of isopentenyl pyrophosphate with dimethylallyl pyrophosphate, and then with the resultant geranylpyrophosphate to the ultimate product farnesyl pyrophosphate (Probable).</text>
</comment>
<comment type="catalytic activity">
    <reaction evidence="6">
        <text>isopentenyl diphosphate + dimethylallyl diphosphate = (2E)-geranyl diphosphate + diphosphate</text>
        <dbReference type="Rhea" id="RHEA:22408"/>
        <dbReference type="ChEBI" id="CHEBI:33019"/>
        <dbReference type="ChEBI" id="CHEBI:57623"/>
        <dbReference type="ChEBI" id="CHEBI:58057"/>
        <dbReference type="ChEBI" id="CHEBI:128769"/>
        <dbReference type="EC" id="2.5.1.1"/>
    </reaction>
    <physiologicalReaction direction="left-to-right" evidence="6">
        <dbReference type="Rhea" id="RHEA:22409"/>
    </physiologicalReaction>
</comment>
<comment type="catalytic activity">
    <reaction evidence="6">
        <text>isopentenyl diphosphate + (2E)-geranyl diphosphate = (2E,6E)-farnesyl diphosphate + diphosphate</text>
        <dbReference type="Rhea" id="RHEA:19361"/>
        <dbReference type="ChEBI" id="CHEBI:33019"/>
        <dbReference type="ChEBI" id="CHEBI:58057"/>
        <dbReference type="ChEBI" id="CHEBI:128769"/>
        <dbReference type="ChEBI" id="CHEBI:175763"/>
        <dbReference type="EC" id="2.5.1.10"/>
    </reaction>
    <physiologicalReaction direction="left-to-right" evidence="6">
        <dbReference type="Rhea" id="RHEA:19362"/>
    </physiologicalReaction>
</comment>
<comment type="cofactor">
    <cofactor evidence="2">
        <name>Mg(2+)</name>
        <dbReference type="ChEBI" id="CHEBI:18420"/>
    </cofactor>
    <text evidence="2">Binds 2 Mg(2+) ions per subunit.</text>
</comment>
<comment type="pathway">
    <text evidence="3">Isoprenoid biosynthesis; farnesyl diphosphate biosynthesis; farnesyl diphosphate from geranyl diphosphate and isopentenyl diphosphate: step 1/1.</text>
</comment>
<comment type="pathway">
    <text evidence="3">Isoprenoid biosynthesis; geranyl diphosphate biosynthesis; geranyl diphosphate from dimethylallyl diphosphate and isopentenyl diphosphate: step 1/1.</text>
</comment>
<comment type="induction">
    <text evidence="3">Expression is increased in the presence of fluconazole and decreased in the presence of lovastatin.</text>
</comment>
<comment type="similarity">
    <text evidence="5">Belongs to the FPP/GGPP synthase family.</text>
</comment>
<dbReference type="EC" id="2.5.1.10" evidence="6"/>
<dbReference type="EC" id="2.5.1.1" evidence="6"/>
<dbReference type="EMBL" id="CP017624">
    <property type="protein sequence ID" value="AOW27484.1"/>
    <property type="molecule type" value="Genomic_DNA"/>
</dbReference>
<dbReference type="RefSeq" id="XP_712917.2">
    <property type="nucleotide sequence ID" value="XM_707824.2"/>
</dbReference>
<dbReference type="SMR" id="A0A1D8PH78"/>
<dbReference type="FunCoup" id="A0A1D8PH78">
    <property type="interactions" value="867"/>
</dbReference>
<dbReference type="STRING" id="237561.A0A1D8PH78"/>
<dbReference type="EnsemblFungi" id="C2_04580W_A-T">
    <property type="protein sequence ID" value="C2_04580W_A-T-p1"/>
    <property type="gene ID" value="C2_04580W_A"/>
</dbReference>
<dbReference type="GeneID" id="3645440"/>
<dbReference type="KEGG" id="cal:CAALFM_C204580WA"/>
<dbReference type="CGD" id="CAL0000188232">
    <property type="gene designation" value="ERG20"/>
</dbReference>
<dbReference type="VEuPathDB" id="FungiDB:C2_04580W_A"/>
<dbReference type="eggNOG" id="KOG0711">
    <property type="taxonomic scope" value="Eukaryota"/>
</dbReference>
<dbReference type="InParanoid" id="A0A1D8PH78"/>
<dbReference type="OrthoDB" id="10257492at2759"/>
<dbReference type="UniPathway" id="UPA00259">
    <property type="reaction ID" value="UER00368"/>
</dbReference>
<dbReference type="UniPathway" id="UPA00260">
    <property type="reaction ID" value="UER00369"/>
</dbReference>
<dbReference type="Proteomes" id="UP000000559">
    <property type="component" value="Chromosome 2"/>
</dbReference>
<dbReference type="GO" id="GO:0005737">
    <property type="term" value="C:cytoplasm"/>
    <property type="evidence" value="ECO:0000318"/>
    <property type="project" value="GO_Central"/>
</dbReference>
<dbReference type="GO" id="GO:0062040">
    <property type="term" value="C:fungal biofilm matrix"/>
    <property type="evidence" value="ECO:0000314"/>
    <property type="project" value="CGD"/>
</dbReference>
<dbReference type="GO" id="GO:0004337">
    <property type="term" value="F:(2E,6E)-farnesyl diphosphate synthase activity"/>
    <property type="evidence" value="ECO:0000250"/>
    <property type="project" value="CGD"/>
</dbReference>
<dbReference type="GO" id="GO:0004161">
    <property type="term" value="F:dimethylallyltranstransferase activity"/>
    <property type="evidence" value="ECO:0000250"/>
    <property type="project" value="CGD"/>
</dbReference>
<dbReference type="GO" id="GO:0004311">
    <property type="term" value="F:geranylgeranyl diphosphate synthase activity"/>
    <property type="evidence" value="ECO:0007669"/>
    <property type="project" value="EnsemblFungi"/>
</dbReference>
<dbReference type="GO" id="GO:0046872">
    <property type="term" value="F:metal ion binding"/>
    <property type="evidence" value="ECO:0007669"/>
    <property type="project" value="UniProtKB-KW"/>
</dbReference>
<dbReference type="GO" id="GO:0006696">
    <property type="term" value="P:ergosterol biosynthetic process"/>
    <property type="evidence" value="ECO:0000250"/>
    <property type="project" value="CGD"/>
</dbReference>
<dbReference type="GO" id="GO:0045337">
    <property type="term" value="P:farnesyl diphosphate biosynthetic process"/>
    <property type="evidence" value="ECO:0000318"/>
    <property type="project" value="GO_Central"/>
</dbReference>
<dbReference type="GO" id="GO:0033384">
    <property type="term" value="P:geranyl diphosphate biosynthetic process"/>
    <property type="evidence" value="ECO:0007669"/>
    <property type="project" value="UniProtKB-UniPathway"/>
</dbReference>
<dbReference type="GO" id="GO:0008299">
    <property type="term" value="P:isoprenoid biosynthetic process"/>
    <property type="evidence" value="ECO:0000250"/>
    <property type="project" value="CGD"/>
</dbReference>
<dbReference type="CDD" id="cd00685">
    <property type="entry name" value="Trans_IPPS_HT"/>
    <property type="match status" value="1"/>
</dbReference>
<dbReference type="FunFam" id="1.10.600.10:FF:000006">
    <property type="entry name" value="Farnesyl pyrophosphate synthase"/>
    <property type="match status" value="1"/>
</dbReference>
<dbReference type="Gene3D" id="1.10.600.10">
    <property type="entry name" value="Farnesyl Diphosphate Synthase"/>
    <property type="match status" value="1"/>
</dbReference>
<dbReference type="InterPro" id="IPR039702">
    <property type="entry name" value="FPS1-like"/>
</dbReference>
<dbReference type="InterPro" id="IPR008949">
    <property type="entry name" value="Isoprenoid_synthase_dom_sf"/>
</dbReference>
<dbReference type="InterPro" id="IPR000092">
    <property type="entry name" value="Polyprenyl_synt"/>
</dbReference>
<dbReference type="InterPro" id="IPR033749">
    <property type="entry name" value="Polyprenyl_synt_CS"/>
</dbReference>
<dbReference type="PANTHER" id="PTHR11525:SF0">
    <property type="entry name" value="FARNESYL PYROPHOSPHATE SYNTHASE"/>
    <property type="match status" value="1"/>
</dbReference>
<dbReference type="PANTHER" id="PTHR11525">
    <property type="entry name" value="FARNESYL-PYROPHOSPHATE SYNTHETASE"/>
    <property type="match status" value="1"/>
</dbReference>
<dbReference type="Pfam" id="PF00348">
    <property type="entry name" value="polyprenyl_synt"/>
    <property type="match status" value="1"/>
</dbReference>
<dbReference type="SFLD" id="SFLDS00005">
    <property type="entry name" value="Isoprenoid_Synthase_Type_I"/>
    <property type="match status" value="1"/>
</dbReference>
<dbReference type="SFLD" id="SFLDG01017">
    <property type="entry name" value="Polyprenyl_Transferase_Like"/>
    <property type="match status" value="1"/>
</dbReference>
<dbReference type="SUPFAM" id="SSF48576">
    <property type="entry name" value="Terpenoid synthases"/>
    <property type="match status" value="1"/>
</dbReference>
<dbReference type="PROSITE" id="PS00723">
    <property type="entry name" value="POLYPRENYL_SYNTHASE_1"/>
    <property type="match status" value="1"/>
</dbReference>
<dbReference type="PROSITE" id="PS00444">
    <property type="entry name" value="POLYPRENYL_SYNTHASE_2"/>
    <property type="match status" value="1"/>
</dbReference>
<evidence type="ECO:0000250" key="1">
    <source>
        <dbReference type="UniProtKB" id="P08524"/>
    </source>
</evidence>
<evidence type="ECO:0000250" key="2">
    <source>
        <dbReference type="UniProtKB" id="Q12051"/>
    </source>
</evidence>
<evidence type="ECO:0000269" key="3">
    <source>
    </source>
</evidence>
<evidence type="ECO:0000303" key="4">
    <source>
    </source>
</evidence>
<evidence type="ECO:0000305" key="5"/>
<evidence type="ECO:0000305" key="6">
    <source>
    </source>
</evidence>
<keyword id="KW-0444">Lipid biosynthesis</keyword>
<keyword id="KW-0443">Lipid metabolism</keyword>
<keyword id="KW-0460">Magnesium</keyword>
<keyword id="KW-0479">Metal-binding</keyword>
<keyword id="KW-1185">Reference proteome</keyword>
<keyword id="KW-0752">Steroid biosynthesis</keyword>
<keyword id="KW-0808">Transferase</keyword>
<proteinExistence type="evidence at protein level"/>
<name>ERG20_CANAL</name>
<organism>
    <name type="scientific">Candida albicans (strain SC5314 / ATCC MYA-2876)</name>
    <name type="common">Yeast</name>
    <dbReference type="NCBI Taxonomy" id="237561"/>
    <lineage>
        <taxon>Eukaryota</taxon>
        <taxon>Fungi</taxon>
        <taxon>Dikarya</taxon>
        <taxon>Ascomycota</taxon>
        <taxon>Saccharomycotina</taxon>
        <taxon>Pichiomycetes</taxon>
        <taxon>Debaryomycetaceae</taxon>
        <taxon>Candida/Lodderomyces clade</taxon>
        <taxon>Candida</taxon>
    </lineage>
</organism>